<comment type="function">
    <text evidence="1">Catalyzes the methyl esterification of L-isoaspartyl residues in peptides and proteins that result from spontaneous decomposition of normal L-aspartyl and L-asparaginyl residues. It plays a role in the repair and/or degradation of damaged proteins.</text>
</comment>
<comment type="catalytic activity">
    <reaction evidence="1">
        <text>[protein]-L-isoaspartate + S-adenosyl-L-methionine = [protein]-L-isoaspartate alpha-methyl ester + S-adenosyl-L-homocysteine</text>
        <dbReference type="Rhea" id="RHEA:12705"/>
        <dbReference type="Rhea" id="RHEA-COMP:12143"/>
        <dbReference type="Rhea" id="RHEA-COMP:12144"/>
        <dbReference type="ChEBI" id="CHEBI:57856"/>
        <dbReference type="ChEBI" id="CHEBI:59789"/>
        <dbReference type="ChEBI" id="CHEBI:90596"/>
        <dbReference type="ChEBI" id="CHEBI:90598"/>
        <dbReference type="EC" id="2.1.1.77"/>
    </reaction>
</comment>
<comment type="subcellular location">
    <subcellularLocation>
        <location evidence="1">Cytoplasm</location>
    </subcellularLocation>
</comment>
<comment type="similarity">
    <text evidence="1">Belongs to the methyltransferase superfamily. L-isoaspartyl/D-aspartyl protein methyltransferase family.</text>
</comment>
<comment type="sequence caution" evidence="2">
    <conflict type="erroneous initiation">
        <sequence resource="EMBL-CDS" id="AAY90492"/>
    </conflict>
</comment>
<dbReference type="EC" id="2.1.1.77" evidence="1"/>
<dbReference type="EMBL" id="CP000076">
    <property type="protein sequence ID" value="AAY90492.1"/>
    <property type="status" value="ALT_INIT"/>
    <property type="molecule type" value="Genomic_DNA"/>
</dbReference>
<dbReference type="SMR" id="Q4KHE7"/>
<dbReference type="STRING" id="220664.PFL_1205"/>
<dbReference type="KEGG" id="pfl:PFL_1205"/>
<dbReference type="eggNOG" id="COG2518">
    <property type="taxonomic scope" value="Bacteria"/>
</dbReference>
<dbReference type="HOGENOM" id="CLU_055432_2_0_6"/>
<dbReference type="Proteomes" id="UP000008540">
    <property type="component" value="Chromosome"/>
</dbReference>
<dbReference type="GO" id="GO:0005737">
    <property type="term" value="C:cytoplasm"/>
    <property type="evidence" value="ECO:0007669"/>
    <property type="project" value="UniProtKB-SubCell"/>
</dbReference>
<dbReference type="GO" id="GO:0004719">
    <property type="term" value="F:protein-L-isoaspartate (D-aspartate) O-methyltransferase activity"/>
    <property type="evidence" value="ECO:0007669"/>
    <property type="project" value="UniProtKB-UniRule"/>
</dbReference>
<dbReference type="GO" id="GO:0032259">
    <property type="term" value="P:methylation"/>
    <property type="evidence" value="ECO:0007669"/>
    <property type="project" value="UniProtKB-KW"/>
</dbReference>
<dbReference type="GO" id="GO:0036211">
    <property type="term" value="P:protein modification process"/>
    <property type="evidence" value="ECO:0007669"/>
    <property type="project" value="UniProtKB-UniRule"/>
</dbReference>
<dbReference type="GO" id="GO:0030091">
    <property type="term" value="P:protein repair"/>
    <property type="evidence" value="ECO:0007669"/>
    <property type="project" value="UniProtKB-UniRule"/>
</dbReference>
<dbReference type="CDD" id="cd02440">
    <property type="entry name" value="AdoMet_MTases"/>
    <property type="match status" value="1"/>
</dbReference>
<dbReference type="FunFam" id="3.40.50.150:FF:000010">
    <property type="entry name" value="Protein-L-isoaspartate O-methyltransferase"/>
    <property type="match status" value="1"/>
</dbReference>
<dbReference type="Gene3D" id="3.40.50.150">
    <property type="entry name" value="Vaccinia Virus protein VP39"/>
    <property type="match status" value="1"/>
</dbReference>
<dbReference type="HAMAP" id="MF_00090">
    <property type="entry name" value="PIMT"/>
    <property type="match status" value="1"/>
</dbReference>
<dbReference type="InterPro" id="IPR000682">
    <property type="entry name" value="PCMT"/>
</dbReference>
<dbReference type="InterPro" id="IPR029063">
    <property type="entry name" value="SAM-dependent_MTases_sf"/>
</dbReference>
<dbReference type="NCBIfam" id="TIGR00080">
    <property type="entry name" value="pimt"/>
    <property type="match status" value="1"/>
</dbReference>
<dbReference type="NCBIfam" id="NF001453">
    <property type="entry name" value="PRK00312.1"/>
    <property type="match status" value="1"/>
</dbReference>
<dbReference type="PANTHER" id="PTHR11579">
    <property type="entry name" value="PROTEIN-L-ISOASPARTATE O-METHYLTRANSFERASE"/>
    <property type="match status" value="1"/>
</dbReference>
<dbReference type="PANTHER" id="PTHR11579:SF0">
    <property type="entry name" value="PROTEIN-L-ISOASPARTATE(D-ASPARTATE) O-METHYLTRANSFERASE"/>
    <property type="match status" value="1"/>
</dbReference>
<dbReference type="Pfam" id="PF01135">
    <property type="entry name" value="PCMT"/>
    <property type="match status" value="1"/>
</dbReference>
<dbReference type="SUPFAM" id="SSF53335">
    <property type="entry name" value="S-adenosyl-L-methionine-dependent methyltransferases"/>
    <property type="match status" value="1"/>
</dbReference>
<dbReference type="PROSITE" id="PS01279">
    <property type="entry name" value="PCMT"/>
    <property type="match status" value="1"/>
</dbReference>
<reference key="1">
    <citation type="journal article" date="2005" name="Nat. Biotechnol.">
        <title>Complete genome sequence of the plant commensal Pseudomonas fluorescens Pf-5.</title>
        <authorList>
            <person name="Paulsen I.T."/>
            <person name="Press C.M."/>
            <person name="Ravel J."/>
            <person name="Kobayashi D.Y."/>
            <person name="Myers G.S.A."/>
            <person name="Mavrodi D.V."/>
            <person name="DeBoy R.T."/>
            <person name="Seshadri R."/>
            <person name="Ren Q."/>
            <person name="Madupu R."/>
            <person name="Dodson R.J."/>
            <person name="Durkin A.S."/>
            <person name="Brinkac L.M."/>
            <person name="Daugherty S.C."/>
            <person name="Sullivan S.A."/>
            <person name="Rosovitz M.J."/>
            <person name="Gwinn M.L."/>
            <person name="Zhou L."/>
            <person name="Schneider D.J."/>
            <person name="Cartinhour S.W."/>
            <person name="Nelson W.C."/>
            <person name="Weidman J."/>
            <person name="Watkins K."/>
            <person name="Tran K."/>
            <person name="Khouri H."/>
            <person name="Pierson E.A."/>
            <person name="Pierson L.S. III"/>
            <person name="Thomashow L.S."/>
            <person name="Loper J.E."/>
        </authorList>
    </citation>
    <scope>NUCLEOTIDE SEQUENCE [LARGE SCALE GENOMIC DNA]</scope>
    <source>
        <strain>ATCC BAA-477 / NRRL B-23932 / Pf-5</strain>
    </source>
</reference>
<name>PIMT_PSEF5</name>
<organism>
    <name type="scientific">Pseudomonas fluorescens (strain ATCC BAA-477 / NRRL B-23932 / Pf-5)</name>
    <dbReference type="NCBI Taxonomy" id="220664"/>
    <lineage>
        <taxon>Bacteria</taxon>
        <taxon>Pseudomonadati</taxon>
        <taxon>Pseudomonadota</taxon>
        <taxon>Gammaproteobacteria</taxon>
        <taxon>Pseudomonadales</taxon>
        <taxon>Pseudomonadaceae</taxon>
        <taxon>Pseudomonas</taxon>
    </lineage>
</organism>
<gene>
    <name evidence="1" type="primary">pcm</name>
    <name type="ordered locus">PFL_1205</name>
</gene>
<feature type="chain" id="PRO_0000351907" description="Protein-L-isoaspartate O-methyltransferase">
    <location>
        <begin position="1"/>
        <end position="211"/>
    </location>
</feature>
<feature type="active site" evidence="1">
    <location>
        <position position="60"/>
    </location>
</feature>
<keyword id="KW-0963">Cytoplasm</keyword>
<keyword id="KW-0489">Methyltransferase</keyword>
<keyword id="KW-0949">S-adenosyl-L-methionine</keyword>
<keyword id="KW-0808">Transferase</keyword>
<proteinExistence type="inferred from homology"/>
<evidence type="ECO:0000255" key="1">
    <source>
        <dbReference type="HAMAP-Rule" id="MF_00090"/>
    </source>
</evidence>
<evidence type="ECO:0000305" key="2"/>
<protein>
    <recommendedName>
        <fullName evidence="1">Protein-L-isoaspartate O-methyltransferase</fullName>
        <ecNumber evidence="1">2.1.1.77</ecNumber>
    </recommendedName>
    <alternativeName>
        <fullName evidence="1">L-isoaspartyl protein carboxyl methyltransferase</fullName>
    </alternativeName>
    <alternativeName>
        <fullName evidence="1">Protein L-isoaspartyl methyltransferase</fullName>
    </alternativeName>
    <alternativeName>
        <fullName evidence="1">Protein-beta-aspartate methyltransferase</fullName>
        <shortName evidence="1">PIMT</shortName>
    </alternativeName>
</protein>
<sequence>MTSQRTRERLIQRLYDEGLSNPQVLEVIRRTPRHLFVDEALAHRAYEDTALPIGHNQTISQPYMVARMSELLLAAGPLDKVLEIGTGSGYQTAVLSQLVERVFSVERIKVLQDRAKERLQELNLRNVVFRWGDGWEGWPALAPYNGIIVTAVATDIPQALLDQLAPGGRLVIPVGAGEVQQLMLIIREEQGFARHVLGAVRFVPLLNGPLA</sequence>
<accession>Q4KHE7</accession>